<gene>
    <name type="primary">creC</name>
    <name type="ORF">AFLA_036580</name>
</gene>
<keyword id="KW-0677">Repeat</keyword>
<keyword id="KW-0804">Transcription</keyword>
<keyword id="KW-0805">Transcription regulation</keyword>
<keyword id="KW-0833">Ubl conjugation pathway</keyword>
<keyword id="KW-0853">WD repeat</keyword>
<organism>
    <name type="scientific">Aspergillus flavus (strain ATCC 200026 / FGSC A1120 / IAM 13836 / NRRL 3357 / JCM 12722 / SRRC 167)</name>
    <dbReference type="NCBI Taxonomy" id="332952"/>
    <lineage>
        <taxon>Eukaryota</taxon>
        <taxon>Fungi</taxon>
        <taxon>Dikarya</taxon>
        <taxon>Ascomycota</taxon>
        <taxon>Pezizomycotina</taxon>
        <taxon>Eurotiomycetes</taxon>
        <taxon>Eurotiomycetidae</taxon>
        <taxon>Eurotiales</taxon>
        <taxon>Aspergillaceae</taxon>
        <taxon>Aspergillus</taxon>
        <taxon>Aspergillus subgen. Circumdati</taxon>
    </lineage>
</organism>
<accession>B8N4F5</accession>
<dbReference type="EMBL" id="EQ963473">
    <property type="protein sequence ID" value="EED56386.1"/>
    <property type="molecule type" value="Genomic_DNA"/>
</dbReference>
<dbReference type="RefSeq" id="XP_002375168.1">
    <property type="nucleotide sequence ID" value="XM_002375127.1"/>
</dbReference>
<dbReference type="SMR" id="B8N4F5"/>
<dbReference type="STRING" id="332952.B8N4F5"/>
<dbReference type="EnsemblFungi" id="EED56386">
    <property type="protein sequence ID" value="EED56386"/>
    <property type="gene ID" value="AFLA_036580"/>
</dbReference>
<dbReference type="VEuPathDB" id="FungiDB:AFLA_001542"/>
<dbReference type="eggNOG" id="KOG2394">
    <property type="taxonomic scope" value="Eukaryota"/>
</dbReference>
<dbReference type="HOGENOM" id="CLU_016971_1_1_1"/>
<dbReference type="OMA" id="MCVCWSP"/>
<dbReference type="GO" id="GO:0032153">
    <property type="term" value="C:cell division site"/>
    <property type="evidence" value="ECO:0007669"/>
    <property type="project" value="TreeGrafter"/>
</dbReference>
<dbReference type="GO" id="GO:0051286">
    <property type="term" value="C:cell tip"/>
    <property type="evidence" value="ECO:0007669"/>
    <property type="project" value="TreeGrafter"/>
</dbReference>
<dbReference type="GO" id="GO:0005634">
    <property type="term" value="C:nucleus"/>
    <property type="evidence" value="ECO:0007669"/>
    <property type="project" value="TreeGrafter"/>
</dbReference>
<dbReference type="GO" id="GO:0045013">
    <property type="term" value="P:carbon catabolite repression of transcription"/>
    <property type="evidence" value="ECO:0000250"/>
    <property type="project" value="UniProtKB"/>
</dbReference>
<dbReference type="FunFam" id="2.130.10.10:FF:000531">
    <property type="entry name" value="Probable catabolite repression protein creC"/>
    <property type="match status" value="1"/>
</dbReference>
<dbReference type="Gene3D" id="2.130.10.10">
    <property type="entry name" value="YVTN repeat-like/Quinoprotein amine dehydrogenase"/>
    <property type="match status" value="1"/>
</dbReference>
<dbReference type="InterPro" id="IPR015943">
    <property type="entry name" value="WD40/YVTN_repeat-like_dom_sf"/>
</dbReference>
<dbReference type="InterPro" id="IPR036322">
    <property type="entry name" value="WD40_repeat_dom_sf"/>
</dbReference>
<dbReference type="InterPro" id="IPR001680">
    <property type="entry name" value="WD40_rpt"/>
</dbReference>
<dbReference type="InterPro" id="IPR051362">
    <property type="entry name" value="WD_repeat_creC_regulators"/>
</dbReference>
<dbReference type="PANTHER" id="PTHR14107:SF16">
    <property type="entry name" value="AT02583P"/>
    <property type="match status" value="1"/>
</dbReference>
<dbReference type="PANTHER" id="PTHR14107">
    <property type="entry name" value="WD REPEAT PROTEIN"/>
    <property type="match status" value="1"/>
</dbReference>
<dbReference type="Pfam" id="PF00400">
    <property type="entry name" value="WD40"/>
    <property type="match status" value="1"/>
</dbReference>
<dbReference type="SMART" id="SM00320">
    <property type="entry name" value="WD40"/>
    <property type="match status" value="5"/>
</dbReference>
<dbReference type="SUPFAM" id="SSF50978">
    <property type="entry name" value="WD40 repeat-like"/>
    <property type="match status" value="1"/>
</dbReference>
<dbReference type="PROSITE" id="PS50082">
    <property type="entry name" value="WD_REPEATS_2"/>
    <property type="match status" value="1"/>
</dbReference>
<dbReference type="PROSITE" id="PS50294">
    <property type="entry name" value="WD_REPEATS_REGION"/>
    <property type="match status" value="1"/>
</dbReference>
<protein>
    <recommendedName>
        <fullName>Probable catabolite repression protein creC</fullName>
    </recommendedName>
</protein>
<evidence type="ECO:0000250" key="1"/>
<evidence type="ECO:0000256" key="2">
    <source>
        <dbReference type="SAM" id="MobiDB-lite"/>
    </source>
</evidence>
<evidence type="ECO:0000305" key="3"/>
<sequence length="572" mass="63235">MAQGPSCASELHYYRALDHANAGFATGTYHLKDDLHLATPPPHPSEAPVVNPNPLATVPTPPTSGVKLSLVSVGQRNKLPVFTSKEKVTAPPFADGNPALAAIPTKDGLKRRKPKNNIIKSSSSFVSRVITHEASSKRLNDRNPDGLFAFANINRAFQWLDLSSKNKEEPLAKILFTKAHMLTHDINELTKSSSHIDIAMGSSAGDIIWYEPISQKYARINKNGVVSNSPVTHIKWIPGSENMFMAAHANGQLVVYDKEKEDALFTPEISNHSAEAMKASSRLPLQVLKSVNSRNQKTNPVALWKLANQKISQFAFSPDQRHLAVVLEDGSLRVMDYLKEEVLDIFRSYYGGLICVCWSPDGKYIVTGGQDDLVTIWSFPERKIVARCQGHNSWVSTVAFDPWRCDERTYRFGSVGDDCRLLLWDFSVGMLHRPRAHQASARQRTSMIASNTQHFNRHRADSASNRMRSDSQRTADTYNDYDSAVRHPVEPRARTALLPPIMSKIVGDDPICWLGFQEDSIMTSSLEGHIRTWDRPREGINDSYNGNTSSPAISTSAAGSGSGIADSAMGSL</sequence>
<reference key="1">
    <citation type="journal article" date="2015" name="Genome Announc.">
        <title>Genome sequence of Aspergillus flavus NRRL 3357, a strain that causes aflatoxin contamination of food and feed.</title>
        <authorList>
            <person name="Nierman W.C."/>
            <person name="Yu J."/>
            <person name="Fedorova-Abrams N.D."/>
            <person name="Losada L."/>
            <person name="Cleveland T.E."/>
            <person name="Bhatnagar D."/>
            <person name="Bennett J.W."/>
            <person name="Dean R."/>
            <person name="Payne G.A."/>
        </authorList>
    </citation>
    <scope>NUCLEOTIDE SEQUENCE [LARGE SCALE GENOMIC DNA]</scope>
    <source>
        <strain>ATCC 200026 / FGSC A1120 / IAM 13836 / NRRL 3357 / JCM 12722 / SRRC 167</strain>
    </source>
</reference>
<feature type="chain" id="PRO_0000395688" description="Probable catabolite repression protein creC">
    <location>
        <begin position="1"/>
        <end position="572"/>
    </location>
</feature>
<feature type="repeat" description="WD 1">
    <location>
        <begin position="226"/>
        <end position="266"/>
    </location>
</feature>
<feature type="repeat" description="WD 2">
    <location>
        <begin position="306"/>
        <end position="347"/>
    </location>
</feature>
<feature type="repeat" description="WD 3">
    <location>
        <begin position="348"/>
        <end position="387"/>
    </location>
</feature>
<feature type="repeat" description="WD 4">
    <location>
        <begin position="390"/>
        <end position="434"/>
    </location>
</feature>
<feature type="repeat" description="WD 5">
    <location>
        <begin position="506"/>
        <end position="543"/>
    </location>
</feature>
<feature type="region of interest" description="Disordered" evidence="2">
    <location>
        <begin position="36"/>
        <end position="61"/>
    </location>
</feature>
<feature type="region of interest" description="Disordered" evidence="2">
    <location>
        <begin position="458"/>
        <end position="486"/>
    </location>
</feature>
<feature type="region of interest" description="Disordered" evidence="2">
    <location>
        <begin position="541"/>
        <end position="572"/>
    </location>
</feature>
<feature type="compositionally biased region" description="Low complexity" evidence="2">
    <location>
        <begin position="549"/>
        <end position="572"/>
    </location>
</feature>
<name>CREC_ASPFN</name>
<comment type="function">
    <text evidence="1">Component of the regulatory network controlling carbon source utilization through ubiquitination and deubiquitination involving creA, creB, creC, creD and acrB. Required to prevent the proteolysis of the CreB deubiquitinating enzyme in the absence of carbon catabolite repression. CreB deubiquitinating enzyme stabilized in a complex with the CreC leads to the expression of genes such as those in the proline and quinate pathways (By similarity).</text>
</comment>
<comment type="subunit">
    <text evidence="1">Interacts with creB.</text>
</comment>
<comment type="similarity">
    <text evidence="3">Belongs to the WD repeat creC family.</text>
</comment>
<proteinExistence type="inferred from homology"/>